<dbReference type="EC" id="2.1.1.-" evidence="1"/>
<dbReference type="EMBL" id="AK012806">
    <property type="protein sequence ID" value="BAB28484.1"/>
    <property type="molecule type" value="mRNA"/>
</dbReference>
<dbReference type="EMBL" id="AC165966">
    <property type="status" value="NOT_ANNOTATED_CDS"/>
    <property type="molecule type" value="Genomic_DNA"/>
</dbReference>
<dbReference type="CCDS" id="CCDS50190.1"/>
<dbReference type="RefSeq" id="NP_082414.1">
    <property type="nucleotide sequence ID" value="NM_028138.1"/>
</dbReference>
<dbReference type="SMR" id="Q9CZB3"/>
<dbReference type="FunCoup" id="Q9CZB3">
    <property type="interactions" value="184"/>
</dbReference>
<dbReference type="IntAct" id="Q9CZB3">
    <property type="interactions" value="1"/>
</dbReference>
<dbReference type="STRING" id="10090.ENSMUSP00000025093"/>
<dbReference type="iPTMnet" id="Q9CZB3"/>
<dbReference type="PhosphoSitePlus" id="Q9CZB3"/>
<dbReference type="jPOST" id="Q9CZB3"/>
<dbReference type="PaxDb" id="10090-ENSMUSP00000025093"/>
<dbReference type="PeptideAtlas" id="Q9CZB3"/>
<dbReference type="ProteomicsDB" id="258877"/>
<dbReference type="Pumba" id="Q9CZB3"/>
<dbReference type="Antibodypedia" id="29662">
    <property type="antibodies" value="51 antibodies from 17 providers"/>
</dbReference>
<dbReference type="Ensembl" id="ENSMUST00000025093.6">
    <property type="protein sequence ID" value="ENSMUSP00000025093.5"/>
    <property type="gene ID" value="ENSMUSG00000024246.10"/>
</dbReference>
<dbReference type="GeneID" id="72167"/>
<dbReference type="KEGG" id="mmu:72167"/>
<dbReference type="UCSC" id="uc008drp.2">
    <property type="organism name" value="mouse"/>
</dbReference>
<dbReference type="AGR" id="MGI:1919417"/>
<dbReference type="CTD" id="80745"/>
<dbReference type="MGI" id="MGI:1919417">
    <property type="gene designation" value="Thumpd2"/>
</dbReference>
<dbReference type="VEuPathDB" id="HostDB:ENSMUSG00000024246"/>
<dbReference type="eggNOG" id="ENOG502QSR4">
    <property type="taxonomic scope" value="Eukaryota"/>
</dbReference>
<dbReference type="GeneTree" id="ENSGT00530000063557"/>
<dbReference type="HOGENOM" id="CLU_045692_1_0_1"/>
<dbReference type="InParanoid" id="Q9CZB3"/>
<dbReference type="OMA" id="QWTSAVM"/>
<dbReference type="OrthoDB" id="2013972at2759"/>
<dbReference type="PhylomeDB" id="Q9CZB3"/>
<dbReference type="TreeFam" id="TF313093"/>
<dbReference type="BioGRID-ORCS" id="72167">
    <property type="hits" value="2 hits in 79 CRISPR screens"/>
</dbReference>
<dbReference type="ChiTaRS" id="Thumpd2">
    <property type="organism name" value="mouse"/>
</dbReference>
<dbReference type="PRO" id="PR:Q9CZB3"/>
<dbReference type="Proteomes" id="UP000000589">
    <property type="component" value="Chromosome 17"/>
</dbReference>
<dbReference type="RNAct" id="Q9CZB3">
    <property type="molecule type" value="protein"/>
</dbReference>
<dbReference type="Bgee" id="ENSMUSG00000024246">
    <property type="expression patterns" value="Expressed in ventricular zone and 134 other cell types or tissues"/>
</dbReference>
<dbReference type="ExpressionAtlas" id="Q9CZB3">
    <property type="expression patterns" value="baseline and differential"/>
</dbReference>
<dbReference type="GO" id="GO:0005634">
    <property type="term" value="C:nucleus"/>
    <property type="evidence" value="ECO:0000250"/>
    <property type="project" value="UniProtKB"/>
</dbReference>
<dbReference type="GO" id="GO:0043527">
    <property type="term" value="C:tRNA methyltransferase complex"/>
    <property type="evidence" value="ECO:0000250"/>
    <property type="project" value="UniProtKB"/>
</dbReference>
<dbReference type="GO" id="GO:0003723">
    <property type="term" value="F:RNA binding"/>
    <property type="evidence" value="ECO:0007669"/>
    <property type="project" value="UniProtKB-KW"/>
</dbReference>
<dbReference type="GO" id="GO:0160230">
    <property type="term" value="F:U6 snRNA (guanine-N(2))-methyltransferase activity"/>
    <property type="evidence" value="ECO:0000250"/>
    <property type="project" value="UniProtKB"/>
</dbReference>
<dbReference type="GO" id="GO:0032259">
    <property type="term" value="P:methylation"/>
    <property type="evidence" value="ECO:0007669"/>
    <property type="project" value="UniProtKB-KW"/>
</dbReference>
<dbReference type="GO" id="GO:0000381">
    <property type="term" value="P:regulation of alternative mRNA splicing, via spliceosome"/>
    <property type="evidence" value="ECO:0000250"/>
    <property type="project" value="UniProtKB"/>
</dbReference>
<dbReference type="GO" id="GO:0006396">
    <property type="term" value="P:RNA processing"/>
    <property type="evidence" value="ECO:0007669"/>
    <property type="project" value="UniProtKB-ARBA"/>
</dbReference>
<dbReference type="CDD" id="cd02440">
    <property type="entry name" value="AdoMet_MTases"/>
    <property type="match status" value="1"/>
</dbReference>
<dbReference type="CDD" id="cd11715">
    <property type="entry name" value="THUMP_AdoMetMT"/>
    <property type="match status" value="2"/>
</dbReference>
<dbReference type="FunFam" id="3.40.50.150:FF:000177">
    <property type="entry name" value="THUMP domain containing 2, isoform CRA_b"/>
    <property type="match status" value="1"/>
</dbReference>
<dbReference type="Gene3D" id="3.30.2130.30">
    <property type="match status" value="1"/>
</dbReference>
<dbReference type="Gene3D" id="3.40.50.150">
    <property type="entry name" value="Vaccinia Virus protein VP39"/>
    <property type="match status" value="1"/>
</dbReference>
<dbReference type="InterPro" id="IPR000241">
    <property type="entry name" value="RlmKL-like_Mtase"/>
</dbReference>
<dbReference type="InterPro" id="IPR029063">
    <property type="entry name" value="SAM-dependent_MTases_sf"/>
</dbReference>
<dbReference type="InterPro" id="IPR004114">
    <property type="entry name" value="THUMP_dom"/>
</dbReference>
<dbReference type="PANTHER" id="PTHR14911">
    <property type="entry name" value="THUMP DOMAIN-CONTAINING"/>
    <property type="match status" value="1"/>
</dbReference>
<dbReference type="PANTHER" id="PTHR14911:SF1">
    <property type="entry name" value="THUMP DOMAIN-CONTAINING PROTEIN 2"/>
    <property type="match status" value="1"/>
</dbReference>
<dbReference type="Pfam" id="PF01170">
    <property type="entry name" value="UPF0020"/>
    <property type="match status" value="1"/>
</dbReference>
<dbReference type="SMART" id="SM00981">
    <property type="entry name" value="THUMP"/>
    <property type="match status" value="1"/>
</dbReference>
<dbReference type="SUPFAM" id="SSF53335">
    <property type="entry name" value="S-adenosyl-L-methionine-dependent methyltransferases"/>
    <property type="match status" value="1"/>
</dbReference>
<dbReference type="SUPFAM" id="SSF143437">
    <property type="entry name" value="THUMP domain-like"/>
    <property type="match status" value="1"/>
</dbReference>
<dbReference type="PROSITE" id="PS51165">
    <property type="entry name" value="THUMP"/>
    <property type="match status" value="1"/>
</dbReference>
<name>THUM2_MOUSE</name>
<comment type="function">
    <text evidence="1">Catalytic subunit of the THUMPD2-TRM112 methyltransferase complex, that specifically mediates the S-adenosyl-L-methionine-dependent N(2)-methylation of guanosine nucleotides, most probably at position 72 (m2G72), in the U6snRNA of the major spliceosome. This modification in the U6 snRNA affects the constitutive splicing efficiency of introns that have suboptimal splice sites and can impact final mRNA levels.</text>
</comment>
<comment type="catalytic activity">
    <reaction evidence="1">
        <text>guanosine in U6 snRNA + S-adenosyl-L-methionine = N(2)-methylguanosine in U6 snRNA + S-adenosyl-L-homocysteine + H(+)</text>
        <dbReference type="Rhea" id="RHEA:83423"/>
        <dbReference type="Rhea" id="RHEA-COMP:20128"/>
        <dbReference type="Rhea" id="RHEA-COMP:20129"/>
        <dbReference type="ChEBI" id="CHEBI:15378"/>
        <dbReference type="ChEBI" id="CHEBI:57856"/>
        <dbReference type="ChEBI" id="CHEBI:59789"/>
        <dbReference type="ChEBI" id="CHEBI:74269"/>
        <dbReference type="ChEBI" id="CHEBI:74481"/>
    </reaction>
    <physiologicalReaction direction="left-to-right" evidence="1">
        <dbReference type="Rhea" id="RHEA:83424"/>
    </physiologicalReaction>
</comment>
<comment type="subunit">
    <text evidence="1">Part of the heterodimeric THUMPD2-TRM112 methyltransferase complex; this complex forms an active tRNA methyltransferase, where TRMT112 acts as an activator of the catalytic subunit THUMPD2.</text>
</comment>
<comment type="subcellular location">
    <subcellularLocation>
        <location evidence="1">Nucleus</location>
    </subcellularLocation>
</comment>
<comment type="similarity">
    <text evidence="4">Belongs to the methyltransferase superfamily.</text>
</comment>
<evidence type="ECO:0000250" key="1">
    <source>
        <dbReference type="UniProtKB" id="Q9BTF0"/>
    </source>
</evidence>
<evidence type="ECO:0000255" key="2">
    <source>
        <dbReference type="PROSITE-ProRule" id="PRU00529"/>
    </source>
</evidence>
<evidence type="ECO:0000256" key="3">
    <source>
        <dbReference type="SAM" id="MobiDB-lite"/>
    </source>
</evidence>
<evidence type="ECO:0000305" key="4"/>
<evidence type="ECO:0000312" key="5">
    <source>
        <dbReference type="MGI" id="MGI:1919417"/>
    </source>
</evidence>
<accession>Q9CZB3</accession>
<keyword id="KW-0489">Methyltransferase</keyword>
<keyword id="KW-0539">Nucleus</keyword>
<keyword id="KW-1185">Reference proteome</keyword>
<keyword id="KW-0694">RNA-binding</keyword>
<keyword id="KW-0808">Transferase</keyword>
<feature type="chain" id="PRO_0000072533" description="U6 snRNA (guanine-N(2))-methyltransferase THUMPD2">
    <location>
        <begin position="1"/>
        <end position="528"/>
    </location>
</feature>
<feature type="domain" description="THUMP" evidence="2">
    <location>
        <begin position="162"/>
        <end position="266"/>
    </location>
</feature>
<feature type="region of interest" description="Disordered" evidence="3">
    <location>
        <begin position="154"/>
        <end position="200"/>
    </location>
</feature>
<feature type="region of interest" description="Disordered" evidence="3">
    <location>
        <begin position="437"/>
        <end position="460"/>
    </location>
</feature>
<feature type="compositionally biased region" description="Basic and acidic residues" evidence="3">
    <location>
        <begin position="154"/>
        <end position="168"/>
    </location>
</feature>
<sequence>MAVAQADPGSDPAGGARFFCTAGRGLEPFLMREVRARLEATQVEYISGKVFFTTCSDLPSMKKLKSAERLFVLIKKQLPIAVSSLHKGKILNEMQRFVNDDPGSWLEAISLWKKLLEHDPKREKVSQRDANPLKRKAGENETIIAKKLKVEEKQEVAKDHGESQEDKLLQGSPEQGEAVTRTELQDHRLNSTTEKAADAQDQEDLTFRVSCRCTGNVRKVITGQEAGRVIGLALMRQFGWKADLRNPNIEIFMHLSDAYSVVGIPLLRMPLASRTYIQTAGLRSTIAWAMASIAEIKAGALVLDPMCGLGTILVEAAEEWPDVFYMGADMSDAQLLGACDNLKAAGLTDRIELLKSSVTDLPLPSQSTDVIISDIPFGKKFKLGKDIKSILQEMERVLRVGGAMVLLLSEDHHRHLTDCGGSSIPLTSKGHIAEPEMKTLSNPDRTGAPDTASPSQRASSVQCLGRMRPCGSLVPVESFKVSLGKTDAFICKYKKAQASGLSSAECHEPGAHTEMAAMQESPSLQDSL</sequence>
<gene>
    <name evidence="5" type="primary">Thumpd2</name>
</gene>
<organism>
    <name type="scientific">Mus musculus</name>
    <name type="common">Mouse</name>
    <dbReference type="NCBI Taxonomy" id="10090"/>
    <lineage>
        <taxon>Eukaryota</taxon>
        <taxon>Metazoa</taxon>
        <taxon>Chordata</taxon>
        <taxon>Craniata</taxon>
        <taxon>Vertebrata</taxon>
        <taxon>Euteleostomi</taxon>
        <taxon>Mammalia</taxon>
        <taxon>Eutheria</taxon>
        <taxon>Euarchontoglires</taxon>
        <taxon>Glires</taxon>
        <taxon>Rodentia</taxon>
        <taxon>Myomorpha</taxon>
        <taxon>Muroidea</taxon>
        <taxon>Muridae</taxon>
        <taxon>Murinae</taxon>
        <taxon>Mus</taxon>
        <taxon>Mus</taxon>
    </lineage>
</organism>
<protein>
    <recommendedName>
        <fullName evidence="1">U6 snRNA (guanine-N(2))-methyltransferase THUMPD2</fullName>
        <ecNumber evidence="1">2.1.1.-</ecNumber>
    </recommendedName>
    <alternativeName>
        <fullName evidence="5">THUMP domain-containing protein 2</fullName>
    </alternativeName>
</protein>
<proteinExistence type="evidence at transcript level"/>
<reference key="1">
    <citation type="journal article" date="2005" name="Science">
        <title>The transcriptional landscape of the mammalian genome.</title>
        <authorList>
            <person name="Carninci P."/>
            <person name="Kasukawa T."/>
            <person name="Katayama S."/>
            <person name="Gough J."/>
            <person name="Frith M.C."/>
            <person name="Maeda N."/>
            <person name="Oyama R."/>
            <person name="Ravasi T."/>
            <person name="Lenhard B."/>
            <person name="Wells C."/>
            <person name="Kodzius R."/>
            <person name="Shimokawa K."/>
            <person name="Bajic V.B."/>
            <person name="Brenner S.E."/>
            <person name="Batalov S."/>
            <person name="Forrest A.R."/>
            <person name="Zavolan M."/>
            <person name="Davis M.J."/>
            <person name="Wilming L.G."/>
            <person name="Aidinis V."/>
            <person name="Allen J.E."/>
            <person name="Ambesi-Impiombato A."/>
            <person name="Apweiler R."/>
            <person name="Aturaliya R.N."/>
            <person name="Bailey T.L."/>
            <person name="Bansal M."/>
            <person name="Baxter L."/>
            <person name="Beisel K.W."/>
            <person name="Bersano T."/>
            <person name="Bono H."/>
            <person name="Chalk A.M."/>
            <person name="Chiu K.P."/>
            <person name="Choudhary V."/>
            <person name="Christoffels A."/>
            <person name="Clutterbuck D.R."/>
            <person name="Crowe M.L."/>
            <person name="Dalla E."/>
            <person name="Dalrymple B.P."/>
            <person name="de Bono B."/>
            <person name="Della Gatta G."/>
            <person name="di Bernardo D."/>
            <person name="Down T."/>
            <person name="Engstrom P."/>
            <person name="Fagiolini M."/>
            <person name="Faulkner G."/>
            <person name="Fletcher C.F."/>
            <person name="Fukushima T."/>
            <person name="Furuno M."/>
            <person name="Futaki S."/>
            <person name="Gariboldi M."/>
            <person name="Georgii-Hemming P."/>
            <person name="Gingeras T.R."/>
            <person name="Gojobori T."/>
            <person name="Green R.E."/>
            <person name="Gustincich S."/>
            <person name="Harbers M."/>
            <person name="Hayashi Y."/>
            <person name="Hensch T.K."/>
            <person name="Hirokawa N."/>
            <person name="Hill D."/>
            <person name="Huminiecki L."/>
            <person name="Iacono M."/>
            <person name="Ikeo K."/>
            <person name="Iwama A."/>
            <person name="Ishikawa T."/>
            <person name="Jakt M."/>
            <person name="Kanapin A."/>
            <person name="Katoh M."/>
            <person name="Kawasawa Y."/>
            <person name="Kelso J."/>
            <person name="Kitamura H."/>
            <person name="Kitano H."/>
            <person name="Kollias G."/>
            <person name="Krishnan S.P."/>
            <person name="Kruger A."/>
            <person name="Kummerfeld S.K."/>
            <person name="Kurochkin I.V."/>
            <person name="Lareau L.F."/>
            <person name="Lazarevic D."/>
            <person name="Lipovich L."/>
            <person name="Liu J."/>
            <person name="Liuni S."/>
            <person name="McWilliam S."/>
            <person name="Madan Babu M."/>
            <person name="Madera M."/>
            <person name="Marchionni L."/>
            <person name="Matsuda H."/>
            <person name="Matsuzawa S."/>
            <person name="Miki H."/>
            <person name="Mignone F."/>
            <person name="Miyake S."/>
            <person name="Morris K."/>
            <person name="Mottagui-Tabar S."/>
            <person name="Mulder N."/>
            <person name="Nakano N."/>
            <person name="Nakauchi H."/>
            <person name="Ng P."/>
            <person name="Nilsson R."/>
            <person name="Nishiguchi S."/>
            <person name="Nishikawa S."/>
            <person name="Nori F."/>
            <person name="Ohara O."/>
            <person name="Okazaki Y."/>
            <person name="Orlando V."/>
            <person name="Pang K.C."/>
            <person name="Pavan W.J."/>
            <person name="Pavesi G."/>
            <person name="Pesole G."/>
            <person name="Petrovsky N."/>
            <person name="Piazza S."/>
            <person name="Reed J."/>
            <person name="Reid J.F."/>
            <person name="Ring B.Z."/>
            <person name="Ringwald M."/>
            <person name="Rost B."/>
            <person name="Ruan Y."/>
            <person name="Salzberg S.L."/>
            <person name="Sandelin A."/>
            <person name="Schneider C."/>
            <person name="Schoenbach C."/>
            <person name="Sekiguchi K."/>
            <person name="Semple C.A."/>
            <person name="Seno S."/>
            <person name="Sessa L."/>
            <person name="Sheng Y."/>
            <person name="Shibata Y."/>
            <person name="Shimada H."/>
            <person name="Shimada K."/>
            <person name="Silva D."/>
            <person name="Sinclair B."/>
            <person name="Sperling S."/>
            <person name="Stupka E."/>
            <person name="Sugiura K."/>
            <person name="Sultana R."/>
            <person name="Takenaka Y."/>
            <person name="Taki K."/>
            <person name="Tammoja K."/>
            <person name="Tan S.L."/>
            <person name="Tang S."/>
            <person name="Taylor M.S."/>
            <person name="Tegner J."/>
            <person name="Teichmann S.A."/>
            <person name="Ueda H.R."/>
            <person name="van Nimwegen E."/>
            <person name="Verardo R."/>
            <person name="Wei C.L."/>
            <person name="Yagi K."/>
            <person name="Yamanishi H."/>
            <person name="Zabarovsky E."/>
            <person name="Zhu S."/>
            <person name="Zimmer A."/>
            <person name="Hide W."/>
            <person name="Bult C."/>
            <person name="Grimmond S.M."/>
            <person name="Teasdale R.D."/>
            <person name="Liu E.T."/>
            <person name="Brusic V."/>
            <person name="Quackenbush J."/>
            <person name="Wahlestedt C."/>
            <person name="Mattick J.S."/>
            <person name="Hume D.A."/>
            <person name="Kai C."/>
            <person name="Sasaki D."/>
            <person name="Tomaru Y."/>
            <person name="Fukuda S."/>
            <person name="Kanamori-Katayama M."/>
            <person name="Suzuki M."/>
            <person name="Aoki J."/>
            <person name="Arakawa T."/>
            <person name="Iida J."/>
            <person name="Imamura K."/>
            <person name="Itoh M."/>
            <person name="Kato T."/>
            <person name="Kawaji H."/>
            <person name="Kawagashira N."/>
            <person name="Kawashima T."/>
            <person name="Kojima M."/>
            <person name="Kondo S."/>
            <person name="Konno H."/>
            <person name="Nakano K."/>
            <person name="Ninomiya N."/>
            <person name="Nishio T."/>
            <person name="Okada M."/>
            <person name="Plessy C."/>
            <person name="Shibata K."/>
            <person name="Shiraki T."/>
            <person name="Suzuki S."/>
            <person name="Tagami M."/>
            <person name="Waki K."/>
            <person name="Watahiki A."/>
            <person name="Okamura-Oho Y."/>
            <person name="Suzuki H."/>
            <person name="Kawai J."/>
            <person name="Hayashizaki Y."/>
        </authorList>
    </citation>
    <scope>NUCLEOTIDE SEQUENCE [LARGE SCALE MRNA]</scope>
    <source>
        <strain>C57BL/6J</strain>
        <tissue>Embryo</tissue>
    </source>
</reference>
<reference key="2">
    <citation type="journal article" date="2009" name="PLoS Biol.">
        <title>Lineage-specific biology revealed by a finished genome assembly of the mouse.</title>
        <authorList>
            <person name="Church D.M."/>
            <person name="Goodstadt L."/>
            <person name="Hillier L.W."/>
            <person name="Zody M.C."/>
            <person name="Goldstein S."/>
            <person name="She X."/>
            <person name="Bult C.J."/>
            <person name="Agarwala R."/>
            <person name="Cherry J.L."/>
            <person name="DiCuccio M."/>
            <person name="Hlavina W."/>
            <person name="Kapustin Y."/>
            <person name="Meric P."/>
            <person name="Maglott D."/>
            <person name="Birtle Z."/>
            <person name="Marques A.C."/>
            <person name="Graves T."/>
            <person name="Zhou S."/>
            <person name="Teague B."/>
            <person name="Potamousis K."/>
            <person name="Churas C."/>
            <person name="Place M."/>
            <person name="Herschleb J."/>
            <person name="Runnheim R."/>
            <person name="Forrest D."/>
            <person name="Amos-Landgraf J."/>
            <person name="Schwartz D.C."/>
            <person name="Cheng Z."/>
            <person name="Lindblad-Toh K."/>
            <person name="Eichler E.E."/>
            <person name="Ponting C.P."/>
        </authorList>
    </citation>
    <scope>NUCLEOTIDE SEQUENCE [LARGE SCALE GENOMIC DNA]</scope>
    <source>
        <strain>C57BL/6J</strain>
    </source>
</reference>